<dbReference type="EC" id="2.7.7.6" evidence="1"/>
<dbReference type="EMBL" id="BX294145">
    <property type="protein sequence ID" value="CAD75169.1"/>
    <property type="molecule type" value="Genomic_DNA"/>
</dbReference>
<dbReference type="RefSeq" id="NP_867622.1">
    <property type="nucleotide sequence ID" value="NC_005027.1"/>
</dbReference>
<dbReference type="RefSeq" id="WP_007326729.1">
    <property type="nucleotide sequence ID" value="NC_005027.1"/>
</dbReference>
<dbReference type="SMR" id="Q7UP93"/>
<dbReference type="STRING" id="243090.RB7088"/>
<dbReference type="EnsemblBacteria" id="CAD75169">
    <property type="protein sequence ID" value="CAD75169"/>
    <property type="gene ID" value="RB7088"/>
</dbReference>
<dbReference type="KEGG" id="rba:RB7088"/>
<dbReference type="PATRIC" id="fig|243090.15.peg.3428"/>
<dbReference type="eggNOG" id="COG1758">
    <property type="taxonomic scope" value="Bacteria"/>
</dbReference>
<dbReference type="HOGENOM" id="CLU_191492_0_0_0"/>
<dbReference type="InParanoid" id="Q7UP93"/>
<dbReference type="OrthoDB" id="285093at2"/>
<dbReference type="Proteomes" id="UP000001025">
    <property type="component" value="Chromosome"/>
</dbReference>
<dbReference type="GO" id="GO:0000428">
    <property type="term" value="C:DNA-directed RNA polymerase complex"/>
    <property type="evidence" value="ECO:0007669"/>
    <property type="project" value="UniProtKB-KW"/>
</dbReference>
<dbReference type="GO" id="GO:0003677">
    <property type="term" value="F:DNA binding"/>
    <property type="evidence" value="ECO:0007669"/>
    <property type="project" value="UniProtKB-UniRule"/>
</dbReference>
<dbReference type="GO" id="GO:0003899">
    <property type="term" value="F:DNA-directed RNA polymerase activity"/>
    <property type="evidence" value="ECO:0007669"/>
    <property type="project" value="UniProtKB-UniRule"/>
</dbReference>
<dbReference type="GO" id="GO:0006351">
    <property type="term" value="P:DNA-templated transcription"/>
    <property type="evidence" value="ECO:0007669"/>
    <property type="project" value="UniProtKB-UniRule"/>
</dbReference>
<dbReference type="Gene3D" id="3.90.940.10">
    <property type="match status" value="1"/>
</dbReference>
<dbReference type="HAMAP" id="MF_00366">
    <property type="entry name" value="RNApol_bact_RpoZ"/>
    <property type="match status" value="1"/>
</dbReference>
<dbReference type="InterPro" id="IPR003716">
    <property type="entry name" value="DNA-dir_RNA_pol_omega"/>
</dbReference>
<dbReference type="InterPro" id="IPR006110">
    <property type="entry name" value="Pol_omega/Rpo6/RPB6"/>
</dbReference>
<dbReference type="InterPro" id="IPR036161">
    <property type="entry name" value="RPB6/omega-like_sf"/>
</dbReference>
<dbReference type="Pfam" id="PF01192">
    <property type="entry name" value="RNA_pol_Rpb6"/>
    <property type="match status" value="1"/>
</dbReference>
<dbReference type="SUPFAM" id="SSF63562">
    <property type="entry name" value="RPB6/omega subunit-like"/>
    <property type="match status" value="1"/>
</dbReference>
<keyword id="KW-0240">DNA-directed RNA polymerase</keyword>
<keyword id="KW-0548">Nucleotidyltransferase</keyword>
<keyword id="KW-1185">Reference proteome</keyword>
<keyword id="KW-0804">Transcription</keyword>
<keyword id="KW-0808">Transferase</keyword>
<protein>
    <recommendedName>
        <fullName evidence="1">DNA-directed RNA polymerase subunit omega</fullName>
        <shortName evidence="1">RNAP omega subunit</shortName>
        <ecNumber evidence="1">2.7.7.6</ecNumber>
    </recommendedName>
    <alternativeName>
        <fullName evidence="1">RNA polymerase omega subunit</fullName>
    </alternativeName>
    <alternativeName>
        <fullName evidence="1">Transcriptase subunit omega</fullName>
    </alternativeName>
</protein>
<sequence length="90" mass="10122">MLEELKEEEIVNKIGGRFKLSTLIQKRLVQLNQGSRALVSVDTHDKMSIVLQEIVQDKIFLNMENEIETVDDLDAIVAASEAPELDPSDL</sequence>
<name>RPOZ_RHOBA</name>
<comment type="function">
    <text evidence="1">Promotes RNA polymerase assembly. Latches the N- and C-terminal regions of the beta' subunit thereby facilitating its interaction with the beta and alpha subunits.</text>
</comment>
<comment type="catalytic activity">
    <reaction evidence="1">
        <text>RNA(n) + a ribonucleoside 5'-triphosphate = RNA(n+1) + diphosphate</text>
        <dbReference type="Rhea" id="RHEA:21248"/>
        <dbReference type="Rhea" id="RHEA-COMP:14527"/>
        <dbReference type="Rhea" id="RHEA-COMP:17342"/>
        <dbReference type="ChEBI" id="CHEBI:33019"/>
        <dbReference type="ChEBI" id="CHEBI:61557"/>
        <dbReference type="ChEBI" id="CHEBI:140395"/>
        <dbReference type="EC" id="2.7.7.6"/>
    </reaction>
</comment>
<comment type="subunit">
    <text evidence="1">The RNAP catalytic core consists of 2 alpha, 1 beta, 1 beta' and 1 omega subunit. When a sigma factor is associated with the core the holoenzyme is formed, which can initiate transcription.</text>
</comment>
<comment type="similarity">
    <text evidence="1">Belongs to the RNA polymerase subunit omega family.</text>
</comment>
<accession>Q7UP93</accession>
<gene>
    <name evidence="1" type="primary">rpoZ</name>
    <name type="ordered locus">RB7088</name>
</gene>
<proteinExistence type="inferred from homology"/>
<evidence type="ECO:0000255" key="1">
    <source>
        <dbReference type="HAMAP-Rule" id="MF_00366"/>
    </source>
</evidence>
<organism>
    <name type="scientific">Rhodopirellula baltica (strain DSM 10527 / NCIMB 13988 / SH1)</name>
    <dbReference type="NCBI Taxonomy" id="243090"/>
    <lineage>
        <taxon>Bacteria</taxon>
        <taxon>Pseudomonadati</taxon>
        <taxon>Planctomycetota</taxon>
        <taxon>Planctomycetia</taxon>
        <taxon>Pirellulales</taxon>
        <taxon>Pirellulaceae</taxon>
        <taxon>Rhodopirellula</taxon>
    </lineage>
</organism>
<feature type="chain" id="PRO_0000128969" description="DNA-directed RNA polymerase subunit omega">
    <location>
        <begin position="1"/>
        <end position="90"/>
    </location>
</feature>
<reference key="1">
    <citation type="journal article" date="2003" name="Proc. Natl. Acad. Sci. U.S.A.">
        <title>Complete genome sequence of the marine planctomycete Pirellula sp. strain 1.</title>
        <authorList>
            <person name="Gloeckner F.O."/>
            <person name="Kube M."/>
            <person name="Bauer M."/>
            <person name="Teeling H."/>
            <person name="Lombardot T."/>
            <person name="Ludwig W."/>
            <person name="Gade D."/>
            <person name="Beck A."/>
            <person name="Borzym K."/>
            <person name="Heitmann K."/>
            <person name="Rabus R."/>
            <person name="Schlesner H."/>
            <person name="Amann R."/>
            <person name="Reinhardt R."/>
        </authorList>
    </citation>
    <scope>NUCLEOTIDE SEQUENCE [LARGE SCALE GENOMIC DNA]</scope>
    <source>
        <strain>DSM 10527 / NCIMB 13988 / SH1</strain>
    </source>
</reference>